<proteinExistence type="inferred from homology"/>
<sequence length="495" mass="53688">MAVNVRDYIAENYGLFINGEFVKGSSDETIEVTNPATGETLSHITRAKDKDVDHAVEVAQEAFESWSLTSKSERAQMLRDIGDKLMAQKDKIAMIETLNNGKPIRETTAIDIPFAARHFHYFASVIETEEGTVNDIDKDTMSIVRHEPIGVVGAVVAWNFPMLLAAWKIAPAIAAGNTIVIQPSSSTPLSLLEVAKIFQEVLPKGVVNILTGKGSESGNAIFNHDGVDKLSFTGSTDVGYQVAEAAAKHLVPATLELGGKSANIILDDANLDLAVEGIQLGILFNQGEVCSAGSRLLVHEKIYDQLVPRLQEAFSNIKVGDPQDEATQMGSQTGKDQLDKIQSYIDVAKESDAQILAGGHRLTENGLDKGFFFEPTLIAVPDNHHKLAQEEIFGPVLTVIKVKDDQEAIDIANDSKYGLAGGVFSQNITRALNIAKAVRTGRIWINTYNQVPEGAPFGGYKKSGIGRETYKGALSNYQQVKNIYIDTSNALKGLY</sequence>
<dbReference type="EC" id="1.2.1.3"/>
<dbReference type="EMBL" id="AJ938182">
    <property type="protein sequence ID" value="CAI79796.1"/>
    <property type="molecule type" value="Genomic_DNA"/>
</dbReference>
<dbReference type="RefSeq" id="WP_000290390.1">
    <property type="nucleotide sequence ID" value="NC_007622.1"/>
</dbReference>
<dbReference type="SMR" id="Q2YV11"/>
<dbReference type="KEGG" id="sab:SAB0108"/>
<dbReference type="HOGENOM" id="CLU_005391_0_2_9"/>
<dbReference type="GO" id="GO:0004029">
    <property type="term" value="F:aldehyde dehydrogenase (NAD+) activity"/>
    <property type="evidence" value="ECO:0007669"/>
    <property type="project" value="UniProtKB-EC"/>
</dbReference>
<dbReference type="CDD" id="cd07117">
    <property type="entry name" value="ALDH_StaphAldA1"/>
    <property type="match status" value="1"/>
</dbReference>
<dbReference type="FunFam" id="3.40.309.10:FF:000012">
    <property type="entry name" value="Betaine aldehyde dehydrogenase"/>
    <property type="match status" value="1"/>
</dbReference>
<dbReference type="FunFam" id="3.40.605.10:FF:000007">
    <property type="entry name" value="NAD/NADP-dependent betaine aldehyde dehydrogenase"/>
    <property type="match status" value="1"/>
</dbReference>
<dbReference type="Gene3D" id="3.40.605.10">
    <property type="entry name" value="Aldehyde Dehydrogenase, Chain A, domain 1"/>
    <property type="match status" value="1"/>
</dbReference>
<dbReference type="Gene3D" id="3.40.309.10">
    <property type="entry name" value="Aldehyde Dehydrogenase, Chain A, domain 2"/>
    <property type="match status" value="1"/>
</dbReference>
<dbReference type="InterPro" id="IPR016161">
    <property type="entry name" value="Ald_DH/histidinol_DH"/>
</dbReference>
<dbReference type="InterPro" id="IPR016163">
    <property type="entry name" value="Ald_DH_C"/>
</dbReference>
<dbReference type="InterPro" id="IPR016160">
    <property type="entry name" value="Ald_DH_CS_CYS"/>
</dbReference>
<dbReference type="InterPro" id="IPR029510">
    <property type="entry name" value="Ald_DH_CS_GLU"/>
</dbReference>
<dbReference type="InterPro" id="IPR016162">
    <property type="entry name" value="Ald_DH_N"/>
</dbReference>
<dbReference type="InterPro" id="IPR015590">
    <property type="entry name" value="Aldehyde_DH_dom"/>
</dbReference>
<dbReference type="PANTHER" id="PTHR43111">
    <property type="entry name" value="ALDEHYDE DEHYDROGENASE B-RELATED"/>
    <property type="match status" value="1"/>
</dbReference>
<dbReference type="PANTHER" id="PTHR43111:SF1">
    <property type="entry name" value="ALDEHYDE DEHYDROGENASE B-RELATED"/>
    <property type="match status" value="1"/>
</dbReference>
<dbReference type="Pfam" id="PF00171">
    <property type="entry name" value="Aldedh"/>
    <property type="match status" value="1"/>
</dbReference>
<dbReference type="SUPFAM" id="SSF53720">
    <property type="entry name" value="ALDH-like"/>
    <property type="match status" value="1"/>
</dbReference>
<dbReference type="PROSITE" id="PS00070">
    <property type="entry name" value="ALDEHYDE_DEHYDR_CYS"/>
    <property type="match status" value="1"/>
</dbReference>
<dbReference type="PROSITE" id="PS00687">
    <property type="entry name" value="ALDEHYDE_DEHYDR_GLU"/>
    <property type="match status" value="1"/>
</dbReference>
<gene>
    <name type="primary">aldA</name>
    <name type="ordered locus">SAB0108</name>
</gene>
<name>ALDA_STAAB</name>
<organism>
    <name type="scientific">Staphylococcus aureus (strain bovine RF122 / ET3-1)</name>
    <dbReference type="NCBI Taxonomy" id="273036"/>
    <lineage>
        <taxon>Bacteria</taxon>
        <taxon>Bacillati</taxon>
        <taxon>Bacillota</taxon>
        <taxon>Bacilli</taxon>
        <taxon>Bacillales</taxon>
        <taxon>Staphylococcaceae</taxon>
        <taxon>Staphylococcus</taxon>
    </lineage>
</organism>
<evidence type="ECO:0000250" key="1"/>
<evidence type="ECO:0000305" key="2"/>
<feature type="chain" id="PRO_0000290787" description="Putative aldehyde dehydrogenase AldA">
    <location>
        <begin position="1"/>
        <end position="495"/>
    </location>
</feature>
<feature type="active site" evidence="1">
    <location>
        <position position="256"/>
    </location>
</feature>
<feature type="active site" evidence="1">
    <location>
        <position position="290"/>
    </location>
</feature>
<feature type="binding site" evidence="1">
    <location>
        <begin position="212"/>
        <end position="218"/>
    </location>
    <ligand>
        <name>NAD(+)</name>
        <dbReference type="ChEBI" id="CHEBI:57540"/>
    </ligand>
</feature>
<protein>
    <recommendedName>
        <fullName>Putative aldehyde dehydrogenase AldA</fullName>
        <ecNumber>1.2.1.3</ecNumber>
    </recommendedName>
</protein>
<accession>Q2YV11</accession>
<keyword id="KW-0520">NAD</keyword>
<keyword id="KW-0560">Oxidoreductase</keyword>
<reference key="1">
    <citation type="journal article" date="2007" name="PLoS ONE">
        <title>Molecular correlates of host specialization in Staphylococcus aureus.</title>
        <authorList>
            <person name="Herron-Olson L."/>
            <person name="Fitzgerald J.R."/>
            <person name="Musser J.M."/>
            <person name="Kapur V."/>
        </authorList>
    </citation>
    <scope>NUCLEOTIDE SEQUENCE [LARGE SCALE GENOMIC DNA]</scope>
    <source>
        <strain>bovine RF122 / ET3-1</strain>
    </source>
</reference>
<comment type="catalytic activity">
    <reaction>
        <text>an aldehyde + NAD(+) + H2O = a carboxylate + NADH + 2 H(+)</text>
        <dbReference type="Rhea" id="RHEA:16185"/>
        <dbReference type="ChEBI" id="CHEBI:15377"/>
        <dbReference type="ChEBI" id="CHEBI:15378"/>
        <dbReference type="ChEBI" id="CHEBI:17478"/>
        <dbReference type="ChEBI" id="CHEBI:29067"/>
        <dbReference type="ChEBI" id="CHEBI:57540"/>
        <dbReference type="ChEBI" id="CHEBI:57945"/>
        <dbReference type="EC" id="1.2.1.3"/>
    </reaction>
</comment>
<comment type="similarity">
    <text evidence="2">Belongs to the aldehyde dehydrogenase family.</text>
</comment>